<dbReference type="EC" id="4.1.1.65" evidence="1"/>
<dbReference type="EMBL" id="CP000948">
    <property type="protein sequence ID" value="ACB05151.1"/>
    <property type="molecule type" value="Genomic_DNA"/>
</dbReference>
<dbReference type="SMR" id="B1XDR4"/>
<dbReference type="KEGG" id="ecd:ECDH10B_4355"/>
<dbReference type="HOGENOM" id="CLU_029061_4_1_6"/>
<dbReference type="UniPathway" id="UPA00558">
    <property type="reaction ID" value="UER00616"/>
</dbReference>
<dbReference type="GO" id="GO:0005886">
    <property type="term" value="C:plasma membrane"/>
    <property type="evidence" value="ECO:0007669"/>
    <property type="project" value="UniProtKB-SubCell"/>
</dbReference>
<dbReference type="GO" id="GO:0004609">
    <property type="term" value="F:phosphatidylserine decarboxylase activity"/>
    <property type="evidence" value="ECO:0007669"/>
    <property type="project" value="UniProtKB-UniRule"/>
</dbReference>
<dbReference type="GO" id="GO:0006646">
    <property type="term" value="P:phosphatidylethanolamine biosynthetic process"/>
    <property type="evidence" value="ECO:0007669"/>
    <property type="project" value="UniProtKB-UniRule"/>
</dbReference>
<dbReference type="HAMAP" id="MF_00662">
    <property type="entry name" value="PS_decarb_PSD_B_type1"/>
    <property type="match status" value="1"/>
</dbReference>
<dbReference type="InterPro" id="IPR003817">
    <property type="entry name" value="PS_Dcarbxylase"/>
</dbReference>
<dbReference type="InterPro" id="IPR033177">
    <property type="entry name" value="PSD-B"/>
</dbReference>
<dbReference type="InterPro" id="IPR033178">
    <property type="entry name" value="PSD_type1_pro"/>
</dbReference>
<dbReference type="NCBIfam" id="TIGR00163">
    <property type="entry name" value="PS_decarb"/>
    <property type="match status" value="1"/>
</dbReference>
<dbReference type="PANTHER" id="PTHR10067">
    <property type="entry name" value="PHOSPHATIDYLSERINE DECARBOXYLASE"/>
    <property type="match status" value="1"/>
</dbReference>
<dbReference type="PANTHER" id="PTHR10067:SF6">
    <property type="entry name" value="PHOSPHATIDYLSERINE DECARBOXYLASE PROENZYME, MITOCHONDRIAL"/>
    <property type="match status" value="1"/>
</dbReference>
<dbReference type="Pfam" id="PF02666">
    <property type="entry name" value="PS_Dcarbxylase"/>
    <property type="match status" value="1"/>
</dbReference>
<sequence length="322" mass="35934">MLNSFKLSLQYILPKLWLTRLAGWGASKRAGWLTKLVIDLFVKYYKVDMKEAQKPDTASYRTFNEFFVRPLRDEVRPIDTDPNVLVMPADGVISQLGKIEEDKILQAKGHNYSLEALLAGNYLMADLFRNGTFVTTYLSPRDYHRVHMPCNGILREMIYVPGDLFSVNHLTAQNVPNLFARNERVICLFDTEFGPMAQILVGATIVGSIETVWAGTITPPREGIIKRWTWPAGENDGSVALLKGQEMGRFKLGSTVINLFAPGKVNLVEQLESLSVTKIGQPLAVSTETFVTPDAEPAPLPAEEIEAEHDASPLVDDKKDQV</sequence>
<keyword id="KW-1003">Cell membrane</keyword>
<keyword id="KW-0210">Decarboxylase</keyword>
<keyword id="KW-0444">Lipid biosynthesis</keyword>
<keyword id="KW-0443">Lipid metabolism</keyword>
<keyword id="KW-0456">Lyase</keyword>
<keyword id="KW-0472">Membrane</keyword>
<keyword id="KW-0594">Phospholipid biosynthesis</keyword>
<keyword id="KW-1208">Phospholipid metabolism</keyword>
<keyword id="KW-0670">Pyruvate</keyword>
<keyword id="KW-0865">Zymogen</keyword>
<feature type="chain" id="PRO_1000131366" description="Phosphatidylserine decarboxylase beta chain" evidence="1">
    <location>
        <begin position="1"/>
        <end position="253"/>
    </location>
</feature>
<feature type="chain" id="PRO_1000131367" description="Phosphatidylserine decarboxylase alpha chain" evidence="1">
    <location>
        <begin position="254"/>
        <end position="322"/>
    </location>
</feature>
<feature type="region of interest" description="Disordered" evidence="2">
    <location>
        <begin position="293"/>
        <end position="322"/>
    </location>
</feature>
<feature type="compositionally biased region" description="Basic and acidic residues" evidence="2">
    <location>
        <begin position="308"/>
        <end position="322"/>
    </location>
</feature>
<feature type="active site" description="Charge relay system; for autoendoproteolytic cleavage activity" evidence="1">
    <location>
        <position position="90"/>
    </location>
</feature>
<feature type="active site" description="Charge relay system; for autoendoproteolytic cleavage activity" evidence="1">
    <location>
        <position position="147"/>
    </location>
</feature>
<feature type="active site" description="Charge relay system; for autoendoproteolytic cleavage activity" evidence="1">
    <location>
        <position position="254"/>
    </location>
</feature>
<feature type="active site" description="Schiff-base intermediate with substrate; via pyruvic acid; for decarboxylase activity" evidence="1">
    <location>
        <position position="254"/>
    </location>
</feature>
<feature type="site" description="Cleavage (non-hydrolytic); by autocatalysis" evidence="1">
    <location>
        <begin position="253"/>
        <end position="254"/>
    </location>
</feature>
<feature type="modified residue" description="Pyruvic acid (Ser); by autocatalysis" evidence="1">
    <location>
        <position position="254"/>
    </location>
</feature>
<name>PSD_ECODH</name>
<evidence type="ECO:0000255" key="1">
    <source>
        <dbReference type="HAMAP-Rule" id="MF_00662"/>
    </source>
</evidence>
<evidence type="ECO:0000256" key="2">
    <source>
        <dbReference type="SAM" id="MobiDB-lite"/>
    </source>
</evidence>
<gene>
    <name evidence="1" type="primary">psd</name>
    <name type="ordered locus">ECDH10B_4355</name>
</gene>
<comment type="function">
    <text evidence="1">Catalyzes the formation of phosphatidylethanolamine (PtdEtn) from phosphatidylserine (PtdSer).</text>
</comment>
<comment type="catalytic activity">
    <reaction evidence="1">
        <text>a 1,2-diacyl-sn-glycero-3-phospho-L-serine + H(+) = a 1,2-diacyl-sn-glycero-3-phosphoethanolamine + CO2</text>
        <dbReference type="Rhea" id="RHEA:20828"/>
        <dbReference type="ChEBI" id="CHEBI:15378"/>
        <dbReference type="ChEBI" id="CHEBI:16526"/>
        <dbReference type="ChEBI" id="CHEBI:57262"/>
        <dbReference type="ChEBI" id="CHEBI:64612"/>
        <dbReference type="EC" id="4.1.1.65"/>
    </reaction>
</comment>
<comment type="cofactor">
    <cofactor evidence="1">
        <name>pyruvate</name>
        <dbReference type="ChEBI" id="CHEBI:15361"/>
    </cofactor>
    <text evidence="1">Binds 1 pyruvoyl group covalently per subunit.</text>
</comment>
<comment type="pathway">
    <text evidence="1">Phospholipid metabolism; phosphatidylethanolamine biosynthesis; phosphatidylethanolamine from CDP-diacylglycerol: step 2/2.</text>
</comment>
<comment type="subunit">
    <text evidence="1">Heterodimer of a large membrane-associated beta subunit and a small pyruvoyl-containing alpha subunit.</text>
</comment>
<comment type="subcellular location">
    <subcellularLocation>
        <location evidence="1">Cell membrane</location>
        <topology evidence="1">Peripheral membrane protein</topology>
    </subcellularLocation>
</comment>
<comment type="PTM">
    <text evidence="1">Is synthesized initially as an inactive proenzyme. Formation of the active enzyme involves a self-maturation process in which the active site pyruvoyl group is generated from an internal serine residue via an autocatalytic post-translational modification. Two non-identical subunits are generated from the proenzyme in this reaction, and the pyruvate is formed at the N-terminus of the alpha chain, which is derived from the carboxyl end of the proenzyme. The autoendoproteolytic cleavage occurs by a canonical serine protease mechanism, in which the side chain hydroxyl group of the serine supplies its oxygen atom to form the C-terminus of the beta chain, while the remainder of the serine residue undergoes an oxidative deamination to produce ammonia and the pyruvoyl prosthetic group on the alpha chain. During this reaction, the Ser that is part of the protease active site of the proenzyme becomes the pyruvoyl prosthetic group, which constitutes an essential element of the active site of the mature decarboxylase.</text>
</comment>
<comment type="similarity">
    <text evidence="1">Belongs to the phosphatidylserine decarboxylase family. PSD-B subfamily. Prokaryotic type I sub-subfamily.</text>
</comment>
<proteinExistence type="inferred from homology"/>
<protein>
    <recommendedName>
        <fullName evidence="1">Phosphatidylserine decarboxylase proenzyme</fullName>
        <ecNumber evidence="1">4.1.1.65</ecNumber>
    </recommendedName>
    <component>
        <recommendedName>
            <fullName evidence="1">Phosphatidylserine decarboxylase alpha chain</fullName>
        </recommendedName>
    </component>
    <component>
        <recommendedName>
            <fullName evidence="1">Phosphatidylserine decarboxylase beta chain</fullName>
        </recommendedName>
    </component>
</protein>
<organism>
    <name type="scientific">Escherichia coli (strain K12 / DH10B)</name>
    <dbReference type="NCBI Taxonomy" id="316385"/>
    <lineage>
        <taxon>Bacteria</taxon>
        <taxon>Pseudomonadati</taxon>
        <taxon>Pseudomonadota</taxon>
        <taxon>Gammaproteobacteria</taxon>
        <taxon>Enterobacterales</taxon>
        <taxon>Enterobacteriaceae</taxon>
        <taxon>Escherichia</taxon>
    </lineage>
</organism>
<accession>B1XDR4</accession>
<reference key="1">
    <citation type="journal article" date="2008" name="J. Bacteriol.">
        <title>The complete genome sequence of Escherichia coli DH10B: insights into the biology of a laboratory workhorse.</title>
        <authorList>
            <person name="Durfee T."/>
            <person name="Nelson R."/>
            <person name="Baldwin S."/>
            <person name="Plunkett G. III"/>
            <person name="Burland V."/>
            <person name="Mau B."/>
            <person name="Petrosino J.F."/>
            <person name="Qin X."/>
            <person name="Muzny D.M."/>
            <person name="Ayele M."/>
            <person name="Gibbs R.A."/>
            <person name="Csorgo B."/>
            <person name="Posfai G."/>
            <person name="Weinstock G.M."/>
            <person name="Blattner F.R."/>
        </authorList>
    </citation>
    <scope>NUCLEOTIDE SEQUENCE [LARGE SCALE GENOMIC DNA]</scope>
    <source>
        <strain>K12 / DH10B</strain>
    </source>
</reference>